<feature type="chain" id="PRO_0000287861" description="NADH-quinone oxidoreductase subunit C/D">
    <location>
        <begin position="1"/>
        <end position="593"/>
    </location>
</feature>
<feature type="region of interest" description="NADH dehydrogenase I subunit C" evidence="1">
    <location>
        <begin position="1"/>
        <end position="184"/>
    </location>
</feature>
<feature type="region of interest" description="NADH dehydrogenase I subunit D" evidence="1">
    <location>
        <begin position="208"/>
        <end position="593"/>
    </location>
</feature>
<organism>
    <name type="scientific">Pseudomonas aeruginosa (strain ATCC 15692 / DSM 22644 / CIP 104116 / JCM 14847 / LMG 12228 / 1C / PRS 101 / PAO1)</name>
    <dbReference type="NCBI Taxonomy" id="208964"/>
    <lineage>
        <taxon>Bacteria</taxon>
        <taxon>Pseudomonadati</taxon>
        <taxon>Pseudomonadota</taxon>
        <taxon>Gammaproteobacteria</taxon>
        <taxon>Pseudomonadales</taxon>
        <taxon>Pseudomonadaceae</taxon>
        <taxon>Pseudomonas</taxon>
    </lineage>
</organism>
<gene>
    <name evidence="1" type="primary">nuoC</name>
    <name evidence="1" type="synonym">nuoCD</name>
    <name evidence="1" type="synonym">nuoD</name>
    <name type="ordered locus">PA2639</name>
</gene>
<protein>
    <recommendedName>
        <fullName evidence="1">NADH-quinone oxidoreductase subunit C/D</fullName>
        <ecNumber evidence="1">7.1.1.-</ecNumber>
    </recommendedName>
    <alternativeName>
        <fullName evidence="1">NADH dehydrogenase I subunit C/D</fullName>
    </alternativeName>
    <alternativeName>
        <fullName evidence="1">NDH-1 subunit C/D</fullName>
    </alternativeName>
</protein>
<comment type="function">
    <text evidence="1">NDH-1 shuttles electrons from NADH, via FMN and iron-sulfur (Fe-S) centers, to quinones in the respiratory chain. The immediate electron acceptor for the enzyme in this species is believed to be ubiquinone. Couples the redox reaction to proton translocation (for every two electrons transferred, four hydrogen ions are translocated across the cytoplasmic membrane), and thus conserves the redox energy in a proton gradient.</text>
</comment>
<comment type="catalytic activity">
    <reaction evidence="1">
        <text>a quinone + NADH + 5 H(+)(in) = a quinol + NAD(+) + 4 H(+)(out)</text>
        <dbReference type="Rhea" id="RHEA:57888"/>
        <dbReference type="ChEBI" id="CHEBI:15378"/>
        <dbReference type="ChEBI" id="CHEBI:24646"/>
        <dbReference type="ChEBI" id="CHEBI:57540"/>
        <dbReference type="ChEBI" id="CHEBI:57945"/>
        <dbReference type="ChEBI" id="CHEBI:132124"/>
    </reaction>
</comment>
<comment type="subunit">
    <text evidence="1">NDH-1 is composed of 13 different subunits. Subunits NuoB, CD, E, F, and G constitute the peripheral sector of the complex.</text>
</comment>
<comment type="subcellular location">
    <subcellularLocation>
        <location evidence="1">Cell inner membrane</location>
        <topology evidence="1">Peripheral membrane protein</topology>
        <orientation evidence="1">Cytoplasmic side</orientation>
    </subcellularLocation>
</comment>
<comment type="similarity">
    <text evidence="1">In the N-terminal section; belongs to the complex I 30 kDa subunit family.</text>
</comment>
<comment type="similarity">
    <text evidence="1">In the C-terminal section; belongs to the complex I 49 kDa subunit family.</text>
</comment>
<proteinExistence type="inferred from homology"/>
<dbReference type="EC" id="7.1.1.-" evidence="1"/>
<dbReference type="EMBL" id="AE004091">
    <property type="protein sequence ID" value="AAG06027.1"/>
    <property type="molecule type" value="Genomic_DNA"/>
</dbReference>
<dbReference type="PIR" id="D83316">
    <property type="entry name" value="D83316"/>
</dbReference>
<dbReference type="RefSeq" id="NP_251329.1">
    <property type="nucleotide sequence ID" value="NC_002516.2"/>
</dbReference>
<dbReference type="RefSeq" id="WP_003090458.1">
    <property type="nucleotide sequence ID" value="NZ_QZGE01000008.1"/>
</dbReference>
<dbReference type="SMR" id="Q9I0J9"/>
<dbReference type="FunCoup" id="Q9I0J9">
    <property type="interactions" value="489"/>
</dbReference>
<dbReference type="STRING" id="208964.PA2639"/>
<dbReference type="PaxDb" id="208964-PA2639"/>
<dbReference type="DNASU" id="882346"/>
<dbReference type="GeneID" id="882346"/>
<dbReference type="KEGG" id="pae:PA2639"/>
<dbReference type="PATRIC" id="fig|208964.12.peg.2761"/>
<dbReference type="PseudoCAP" id="PA2639"/>
<dbReference type="HOGENOM" id="CLU_015134_3_2_6"/>
<dbReference type="InParanoid" id="Q9I0J9"/>
<dbReference type="OrthoDB" id="9801496at2"/>
<dbReference type="PhylomeDB" id="Q9I0J9"/>
<dbReference type="BioCyc" id="PAER208964:G1FZ6-2679-MONOMER"/>
<dbReference type="Proteomes" id="UP000002438">
    <property type="component" value="Chromosome"/>
</dbReference>
<dbReference type="GO" id="GO:0030964">
    <property type="term" value="C:NADH dehydrogenase complex"/>
    <property type="evidence" value="ECO:0007669"/>
    <property type="project" value="InterPro"/>
</dbReference>
<dbReference type="GO" id="GO:0005886">
    <property type="term" value="C:plasma membrane"/>
    <property type="evidence" value="ECO:0000318"/>
    <property type="project" value="GO_Central"/>
</dbReference>
<dbReference type="GO" id="GO:0051287">
    <property type="term" value="F:NAD binding"/>
    <property type="evidence" value="ECO:0007669"/>
    <property type="project" value="InterPro"/>
</dbReference>
<dbReference type="GO" id="GO:0008137">
    <property type="term" value="F:NADH dehydrogenase (ubiquinone) activity"/>
    <property type="evidence" value="ECO:0007669"/>
    <property type="project" value="InterPro"/>
</dbReference>
<dbReference type="GO" id="GO:0050136">
    <property type="term" value="F:NADH:ubiquinone reductase (non-electrogenic) activity"/>
    <property type="evidence" value="ECO:0007669"/>
    <property type="project" value="UniProtKB-UniRule"/>
</dbReference>
<dbReference type="GO" id="GO:0048038">
    <property type="term" value="F:quinone binding"/>
    <property type="evidence" value="ECO:0007669"/>
    <property type="project" value="UniProtKB-KW"/>
</dbReference>
<dbReference type="FunFam" id="1.10.645.10:FF:000001">
    <property type="entry name" value="NADH-quinone oxidoreductase subunit C/D"/>
    <property type="match status" value="1"/>
</dbReference>
<dbReference type="FunFam" id="3.30.460.80:FF:000001">
    <property type="entry name" value="NADH-quinone oxidoreductase subunit C/D"/>
    <property type="match status" value="1"/>
</dbReference>
<dbReference type="Gene3D" id="1.10.645.10">
    <property type="entry name" value="Cytochrome-c3 Hydrogenase, chain B"/>
    <property type="match status" value="1"/>
</dbReference>
<dbReference type="Gene3D" id="3.30.460.80">
    <property type="entry name" value="NADH:ubiquinone oxidoreductase, 30kDa subunit"/>
    <property type="match status" value="1"/>
</dbReference>
<dbReference type="HAMAP" id="MF_01357">
    <property type="entry name" value="NDH1_NuoC"/>
    <property type="match status" value="1"/>
</dbReference>
<dbReference type="HAMAP" id="MF_01359">
    <property type="entry name" value="NDH1_NuoCD_1"/>
    <property type="match status" value="1"/>
</dbReference>
<dbReference type="HAMAP" id="MF_01358">
    <property type="entry name" value="NDH1_NuoD"/>
    <property type="match status" value="1"/>
</dbReference>
<dbReference type="InterPro" id="IPR010218">
    <property type="entry name" value="NADH_DH_suC"/>
</dbReference>
<dbReference type="InterPro" id="IPR023062">
    <property type="entry name" value="NADH_DH_suCD"/>
</dbReference>
<dbReference type="InterPro" id="IPR001135">
    <property type="entry name" value="NADH_Q_OxRdtase_suD"/>
</dbReference>
<dbReference type="InterPro" id="IPR037232">
    <property type="entry name" value="NADH_quin_OxRdtase_su_C/D-like"/>
</dbReference>
<dbReference type="InterPro" id="IPR001268">
    <property type="entry name" value="NADH_UbQ_OxRdtase_30kDa_su"/>
</dbReference>
<dbReference type="InterPro" id="IPR014029">
    <property type="entry name" value="NADH_UbQ_OxRdtase_49kDa_CS"/>
</dbReference>
<dbReference type="InterPro" id="IPR022885">
    <property type="entry name" value="NDH1_su_D/H"/>
</dbReference>
<dbReference type="InterPro" id="IPR029014">
    <property type="entry name" value="NiFe-Hase_large"/>
</dbReference>
<dbReference type="NCBIfam" id="TIGR01961">
    <property type="entry name" value="NuoC_fam"/>
    <property type="match status" value="1"/>
</dbReference>
<dbReference type="NCBIfam" id="TIGR01962">
    <property type="entry name" value="NuoD"/>
    <property type="match status" value="1"/>
</dbReference>
<dbReference type="NCBIfam" id="NF004739">
    <property type="entry name" value="PRK06075.1"/>
    <property type="match status" value="1"/>
</dbReference>
<dbReference type="NCBIfam" id="NF008728">
    <property type="entry name" value="PRK11742.1"/>
    <property type="match status" value="1"/>
</dbReference>
<dbReference type="PANTHER" id="PTHR11993:SF45">
    <property type="entry name" value="NADH-QUINONE OXIDOREDUCTASE SUBUNIT C_D"/>
    <property type="match status" value="1"/>
</dbReference>
<dbReference type="PANTHER" id="PTHR11993">
    <property type="entry name" value="NADH-UBIQUINONE OXIDOREDUCTASE 49 KDA SUBUNIT"/>
    <property type="match status" value="1"/>
</dbReference>
<dbReference type="Pfam" id="PF00329">
    <property type="entry name" value="Complex1_30kDa"/>
    <property type="match status" value="1"/>
</dbReference>
<dbReference type="Pfam" id="PF00346">
    <property type="entry name" value="Complex1_49kDa"/>
    <property type="match status" value="1"/>
</dbReference>
<dbReference type="SUPFAM" id="SSF56762">
    <property type="entry name" value="HydB/Nqo4-like"/>
    <property type="match status" value="1"/>
</dbReference>
<dbReference type="SUPFAM" id="SSF143243">
    <property type="entry name" value="Nqo5-like"/>
    <property type="match status" value="1"/>
</dbReference>
<dbReference type="PROSITE" id="PS00535">
    <property type="entry name" value="COMPLEX1_49K"/>
    <property type="match status" value="1"/>
</dbReference>
<reference key="1">
    <citation type="journal article" date="2000" name="Nature">
        <title>Complete genome sequence of Pseudomonas aeruginosa PAO1, an opportunistic pathogen.</title>
        <authorList>
            <person name="Stover C.K."/>
            <person name="Pham X.-Q.T."/>
            <person name="Erwin A.L."/>
            <person name="Mizoguchi S.D."/>
            <person name="Warrener P."/>
            <person name="Hickey M.J."/>
            <person name="Brinkman F.S.L."/>
            <person name="Hufnagle W.O."/>
            <person name="Kowalik D.J."/>
            <person name="Lagrou M."/>
            <person name="Garber R.L."/>
            <person name="Goltry L."/>
            <person name="Tolentino E."/>
            <person name="Westbrock-Wadman S."/>
            <person name="Yuan Y."/>
            <person name="Brody L.L."/>
            <person name="Coulter S.N."/>
            <person name="Folger K.R."/>
            <person name="Kas A."/>
            <person name="Larbig K."/>
            <person name="Lim R.M."/>
            <person name="Smith K.A."/>
            <person name="Spencer D.H."/>
            <person name="Wong G.K.-S."/>
            <person name="Wu Z."/>
            <person name="Paulsen I.T."/>
            <person name="Reizer J."/>
            <person name="Saier M.H. Jr."/>
            <person name="Hancock R.E.W."/>
            <person name="Lory S."/>
            <person name="Olson M.V."/>
        </authorList>
    </citation>
    <scope>NUCLEOTIDE SEQUENCE [LARGE SCALE GENOMIC DNA]</scope>
    <source>
        <strain>ATCC 15692 / DSM 22644 / CIP 104116 / JCM 14847 / LMG 12228 / 1C / PRS 101 / PAO1</strain>
    </source>
</reference>
<evidence type="ECO:0000255" key="1">
    <source>
        <dbReference type="HAMAP-Rule" id="MF_01359"/>
    </source>
</evidence>
<sequence length="593" mass="68323">MTADSALYIPPYKADDQDIVVELNSRFGAETFTVQPTRTGMPVLWVPRERLIEVLTFLRQVPKPYVMLYDLHGVDERLRTHRRGLPSADFSVFYHLMSLERNSDVMIKVALSERDLNLPTATRIWPNANWYEREVWDMYGITFTGHPHLTRMLMPPTWQGHPLRKDYPARATEFDPYSLSAAKQDLEQEALRFKPEDWGMKRHGENEDYMFLNLGPNHPSAHGAFRIILQLDGEEIIDCVPEIGYHHRGAEKMAERQSWHSFIPYTDRIDYLGGVMNNLPYVLSVEKLAGIKVPQRVDVIRIMMAEFFRILNHLLYLGTYIQDVGAMTPVFFTFTDRQRAYKVVEAITGFRLHPAWYRIGGVAHDLPRGWDKLVREFLDWMPKRLDEYETAALKNSILRGRTIGVAQYNTKEALEWGTTGAGLRATGCDFDLRKARPYSGYENFEFEVPLAHNGDAYDRCMVKMGEMRQSLRIIEQCLKNMPEGPYKADHPLTTPPPKERTLQHIETLITHFLQVSWGPVMPANEAFQMIEATKGINSYYLTSDGSTMSYRTRIRTPSFAHLQQIPSVINGSMIADLIAYLGSIDFVMADVDR</sequence>
<name>NUOCD_PSEAE</name>
<accession>Q9I0J9</accession>
<keyword id="KW-0997">Cell inner membrane</keyword>
<keyword id="KW-1003">Cell membrane</keyword>
<keyword id="KW-0472">Membrane</keyword>
<keyword id="KW-0511">Multifunctional enzyme</keyword>
<keyword id="KW-0520">NAD</keyword>
<keyword id="KW-0874">Quinone</keyword>
<keyword id="KW-1185">Reference proteome</keyword>
<keyword id="KW-1278">Translocase</keyword>
<keyword id="KW-0813">Transport</keyword>
<keyword id="KW-0830">Ubiquinone</keyword>